<protein>
    <recommendedName>
        <fullName evidence="1">Tyrosine--tRNA ligase</fullName>
        <ecNumber evidence="1">6.1.1.1</ecNumber>
    </recommendedName>
    <alternativeName>
        <fullName evidence="1">Tyrosyl-tRNA synthetase</fullName>
        <shortName evidence="1">TyrRS</shortName>
    </alternativeName>
</protein>
<keyword id="KW-0030">Aminoacyl-tRNA synthetase</keyword>
<keyword id="KW-0067">ATP-binding</keyword>
<keyword id="KW-0963">Cytoplasm</keyword>
<keyword id="KW-0436">Ligase</keyword>
<keyword id="KW-0547">Nucleotide-binding</keyword>
<keyword id="KW-0648">Protein biosynthesis</keyword>
<keyword id="KW-1185">Reference proteome</keyword>
<keyword id="KW-0694">RNA-binding</keyword>
<comment type="function">
    <text evidence="1">Catalyzes the attachment of tyrosine to tRNA(Tyr) in a two-step reaction: tyrosine is first activated by ATP to form Tyr-AMP and then transferred to the acceptor end of tRNA(Tyr).</text>
</comment>
<comment type="catalytic activity">
    <reaction evidence="1">
        <text>tRNA(Tyr) + L-tyrosine + ATP = L-tyrosyl-tRNA(Tyr) + AMP + diphosphate + H(+)</text>
        <dbReference type="Rhea" id="RHEA:10220"/>
        <dbReference type="Rhea" id="RHEA-COMP:9706"/>
        <dbReference type="Rhea" id="RHEA-COMP:9707"/>
        <dbReference type="ChEBI" id="CHEBI:15378"/>
        <dbReference type="ChEBI" id="CHEBI:30616"/>
        <dbReference type="ChEBI" id="CHEBI:33019"/>
        <dbReference type="ChEBI" id="CHEBI:58315"/>
        <dbReference type="ChEBI" id="CHEBI:78442"/>
        <dbReference type="ChEBI" id="CHEBI:78536"/>
        <dbReference type="ChEBI" id="CHEBI:456215"/>
        <dbReference type="EC" id="6.1.1.1"/>
    </reaction>
</comment>
<comment type="subunit">
    <text evidence="1">Homodimer.</text>
</comment>
<comment type="subcellular location">
    <subcellularLocation>
        <location evidence="1">Cytoplasm</location>
    </subcellularLocation>
</comment>
<comment type="similarity">
    <text evidence="1">Belongs to the class-I aminoacyl-tRNA synthetase family. TyrS type 2 subfamily.</text>
</comment>
<evidence type="ECO:0000255" key="1">
    <source>
        <dbReference type="HAMAP-Rule" id="MF_02007"/>
    </source>
</evidence>
<accession>Q60AU5</accession>
<dbReference type="EC" id="6.1.1.1" evidence="1"/>
<dbReference type="EMBL" id="AE017282">
    <property type="protein sequence ID" value="AAU92997.1"/>
    <property type="molecule type" value="Genomic_DNA"/>
</dbReference>
<dbReference type="RefSeq" id="WP_010960079.1">
    <property type="nucleotide sequence ID" value="NC_002977.6"/>
</dbReference>
<dbReference type="SMR" id="Q60AU5"/>
<dbReference type="STRING" id="243233.MCA0749"/>
<dbReference type="GeneID" id="88223061"/>
<dbReference type="KEGG" id="mca:MCA0749"/>
<dbReference type="eggNOG" id="COG0162">
    <property type="taxonomic scope" value="Bacteria"/>
</dbReference>
<dbReference type="HOGENOM" id="CLU_024003_5_0_6"/>
<dbReference type="Proteomes" id="UP000006821">
    <property type="component" value="Chromosome"/>
</dbReference>
<dbReference type="GO" id="GO:0005829">
    <property type="term" value="C:cytosol"/>
    <property type="evidence" value="ECO:0007669"/>
    <property type="project" value="TreeGrafter"/>
</dbReference>
<dbReference type="GO" id="GO:0005524">
    <property type="term" value="F:ATP binding"/>
    <property type="evidence" value="ECO:0007669"/>
    <property type="project" value="UniProtKB-UniRule"/>
</dbReference>
<dbReference type="GO" id="GO:0003723">
    <property type="term" value="F:RNA binding"/>
    <property type="evidence" value="ECO:0007669"/>
    <property type="project" value="UniProtKB-KW"/>
</dbReference>
<dbReference type="GO" id="GO:0004831">
    <property type="term" value="F:tyrosine-tRNA ligase activity"/>
    <property type="evidence" value="ECO:0007669"/>
    <property type="project" value="UniProtKB-UniRule"/>
</dbReference>
<dbReference type="GO" id="GO:0006437">
    <property type="term" value="P:tyrosyl-tRNA aminoacylation"/>
    <property type="evidence" value="ECO:0007669"/>
    <property type="project" value="UniProtKB-UniRule"/>
</dbReference>
<dbReference type="CDD" id="cd00165">
    <property type="entry name" value="S4"/>
    <property type="match status" value="1"/>
</dbReference>
<dbReference type="CDD" id="cd00805">
    <property type="entry name" value="TyrRS_core"/>
    <property type="match status" value="1"/>
</dbReference>
<dbReference type="FunFam" id="1.10.240.10:FF:000006">
    <property type="entry name" value="Tyrosine--tRNA ligase"/>
    <property type="match status" value="1"/>
</dbReference>
<dbReference type="FunFam" id="3.10.290.10:FF:000022">
    <property type="entry name" value="Tyrosine--tRNA ligase"/>
    <property type="match status" value="1"/>
</dbReference>
<dbReference type="FunFam" id="3.40.50.620:FF:000061">
    <property type="entry name" value="Tyrosine--tRNA ligase"/>
    <property type="match status" value="1"/>
</dbReference>
<dbReference type="Gene3D" id="3.40.50.620">
    <property type="entry name" value="HUPs"/>
    <property type="match status" value="1"/>
</dbReference>
<dbReference type="Gene3D" id="3.10.290.10">
    <property type="entry name" value="RNA-binding S4 domain"/>
    <property type="match status" value="1"/>
</dbReference>
<dbReference type="Gene3D" id="1.10.240.10">
    <property type="entry name" value="Tyrosyl-Transfer RNA Synthetase"/>
    <property type="match status" value="1"/>
</dbReference>
<dbReference type="HAMAP" id="MF_02007">
    <property type="entry name" value="Tyr_tRNA_synth_type2"/>
    <property type="match status" value="1"/>
</dbReference>
<dbReference type="InterPro" id="IPR001412">
    <property type="entry name" value="aa-tRNA-synth_I_CS"/>
</dbReference>
<dbReference type="InterPro" id="IPR002305">
    <property type="entry name" value="aa-tRNA-synth_Ic"/>
</dbReference>
<dbReference type="InterPro" id="IPR014729">
    <property type="entry name" value="Rossmann-like_a/b/a_fold"/>
</dbReference>
<dbReference type="InterPro" id="IPR036986">
    <property type="entry name" value="S4_RNA-bd_sf"/>
</dbReference>
<dbReference type="InterPro" id="IPR002307">
    <property type="entry name" value="Tyr-tRNA-ligase"/>
</dbReference>
<dbReference type="InterPro" id="IPR024088">
    <property type="entry name" value="Tyr-tRNA-ligase_bac-type"/>
</dbReference>
<dbReference type="InterPro" id="IPR024108">
    <property type="entry name" value="Tyr-tRNA-ligase_bac_2"/>
</dbReference>
<dbReference type="NCBIfam" id="TIGR00234">
    <property type="entry name" value="tyrS"/>
    <property type="match status" value="1"/>
</dbReference>
<dbReference type="PANTHER" id="PTHR11766:SF1">
    <property type="entry name" value="TYROSINE--TRNA LIGASE"/>
    <property type="match status" value="1"/>
</dbReference>
<dbReference type="PANTHER" id="PTHR11766">
    <property type="entry name" value="TYROSYL-TRNA SYNTHETASE"/>
    <property type="match status" value="1"/>
</dbReference>
<dbReference type="Pfam" id="PF00579">
    <property type="entry name" value="tRNA-synt_1b"/>
    <property type="match status" value="1"/>
</dbReference>
<dbReference type="PRINTS" id="PR01040">
    <property type="entry name" value="TRNASYNTHTYR"/>
</dbReference>
<dbReference type="SUPFAM" id="SSF55174">
    <property type="entry name" value="Alpha-L RNA-binding motif"/>
    <property type="match status" value="1"/>
</dbReference>
<dbReference type="SUPFAM" id="SSF52374">
    <property type="entry name" value="Nucleotidylyl transferase"/>
    <property type="match status" value="1"/>
</dbReference>
<dbReference type="PROSITE" id="PS00178">
    <property type="entry name" value="AA_TRNA_LIGASE_I"/>
    <property type="match status" value="1"/>
</dbReference>
<dbReference type="PROSITE" id="PS50889">
    <property type="entry name" value="S4"/>
    <property type="match status" value="1"/>
</dbReference>
<name>SYY_METCA</name>
<gene>
    <name evidence="1" type="primary">tyrS</name>
    <name type="ordered locus">MCA0749</name>
</gene>
<reference key="1">
    <citation type="journal article" date="2004" name="PLoS Biol.">
        <title>Genomic insights into methanotrophy: the complete genome sequence of Methylococcus capsulatus (Bath).</title>
        <authorList>
            <person name="Ward N.L."/>
            <person name="Larsen O."/>
            <person name="Sakwa J."/>
            <person name="Bruseth L."/>
            <person name="Khouri H.M."/>
            <person name="Durkin A.S."/>
            <person name="Dimitrov G."/>
            <person name="Jiang L."/>
            <person name="Scanlan D."/>
            <person name="Kang K.H."/>
            <person name="Lewis M.R."/>
            <person name="Nelson K.E."/>
            <person name="Methe B.A."/>
            <person name="Wu M."/>
            <person name="Heidelberg J.F."/>
            <person name="Paulsen I.T."/>
            <person name="Fouts D.E."/>
            <person name="Ravel J."/>
            <person name="Tettelin H."/>
            <person name="Ren Q."/>
            <person name="Read T.D."/>
            <person name="DeBoy R.T."/>
            <person name="Seshadri R."/>
            <person name="Salzberg S.L."/>
            <person name="Jensen H.B."/>
            <person name="Birkeland N.K."/>
            <person name="Nelson W.C."/>
            <person name="Dodson R.J."/>
            <person name="Grindhaug S.H."/>
            <person name="Holt I.E."/>
            <person name="Eidhammer I."/>
            <person name="Jonasen I."/>
            <person name="Vanaken S."/>
            <person name="Utterback T.R."/>
            <person name="Feldblyum T.V."/>
            <person name="Fraser C.M."/>
            <person name="Lillehaug J.R."/>
            <person name="Eisen J.A."/>
        </authorList>
    </citation>
    <scope>NUCLEOTIDE SEQUENCE [LARGE SCALE GENOMIC DNA]</scope>
    <source>
        <strain>ATCC 33009 / NCIMB 11132 / Bath</strain>
    </source>
</reference>
<proteinExistence type="inferred from homology"/>
<feature type="chain" id="PRO_0000236734" description="Tyrosine--tRNA ligase">
    <location>
        <begin position="1"/>
        <end position="397"/>
    </location>
</feature>
<feature type="domain" description="S4 RNA-binding" evidence="1">
    <location>
        <begin position="334"/>
        <end position="395"/>
    </location>
</feature>
<feature type="short sequence motif" description="'HIGH' region">
    <location>
        <begin position="39"/>
        <end position="48"/>
    </location>
</feature>
<feature type="short sequence motif" description="'KMSKS' region">
    <location>
        <begin position="223"/>
        <end position="227"/>
    </location>
</feature>
<feature type="binding site" evidence="1">
    <location>
        <position position="226"/>
    </location>
    <ligand>
        <name>ATP</name>
        <dbReference type="ChEBI" id="CHEBI:30616"/>
    </ligand>
</feature>
<organism>
    <name type="scientific">Methylococcus capsulatus (strain ATCC 33009 / NCIMB 11132 / Bath)</name>
    <dbReference type="NCBI Taxonomy" id="243233"/>
    <lineage>
        <taxon>Bacteria</taxon>
        <taxon>Pseudomonadati</taxon>
        <taxon>Pseudomonadota</taxon>
        <taxon>Gammaproteobacteria</taxon>
        <taxon>Methylococcales</taxon>
        <taxon>Methylococcaceae</taxon>
        <taxon>Methylococcus</taxon>
    </lineage>
</organism>
<sequence length="397" mass="44454">MNDVITQLLRGTHEVLRLEELQKRIESGKPLRIKAGFDPTAPDLHLGHTVLLNKLKQFQDLGHETIFLIGDFTGMIGDPTGKNVTRRPLTRDEVIENAKTYEEQIYKVLCPERTLVMFNSSWMNAMTSADLIQLAAKHTVARMLERDDFAKRYAGGQPISIHEFLYPLIQGYDSVALKADVELGGADQKFNLLVGRHLQEIYGQTPQVVMTMPILEGLDGIQKMSKSLGNYIGIADPPDDMFGKIMSISDDLMWRYYDLLSFAPLAEVARWRRECSEGANPRDVKVRLGQEIVERFHGASAARKALENFEARHRDNAVPDDLVEQVIAVPDGGYPIANLVHDLALTASTSEALRLIKQGGIKIDGERLEDPKCRMTAGGTHIIQVGKRKFAKIRLTP</sequence>